<comment type="subcellular location">
    <subcellularLocation>
        <location evidence="1">Secreted</location>
    </subcellularLocation>
</comment>
<comment type="tissue specificity">
    <text>Expressed by the venom duct.</text>
</comment>
<comment type="domain">
    <text evidence="1">The presence of a 'disulfide through disulfide knot' structurally defines this protein as a knottin.</text>
</comment>
<comment type="domain">
    <text>The cysteine framework is VI/VII (C-C-CC-C-C).</text>
</comment>
<comment type="similarity">
    <text evidence="3">Belongs to the conotoxin O2 superfamily.</text>
</comment>
<reference key="1">
    <citation type="journal article" date="2001" name="Mol. Biol. Evol.">
        <title>Mechanisms for evolving hypervariability: the case of conopeptides.</title>
        <authorList>
            <person name="Conticello S.G."/>
            <person name="Gilad Y."/>
            <person name="Avidan N."/>
            <person name="Ben-Asher E."/>
            <person name="Levy Z."/>
            <person name="Fainzilber M."/>
        </authorList>
    </citation>
    <scope>NUCLEOTIDE SEQUENCE [MRNA]</scope>
    <source>
        <tissue>Venom duct</tissue>
    </source>
</reference>
<protein>
    <recommendedName>
        <fullName>Conotoxin TsMEKL-P012</fullName>
    </recommendedName>
</protein>
<proteinExistence type="evidence at transcript level"/>
<dbReference type="EMBL" id="AF215013">
    <property type="protein sequence ID" value="AAG60441.1"/>
    <property type="molecule type" value="mRNA"/>
</dbReference>
<dbReference type="SMR" id="Q9BPC1"/>
<dbReference type="ConoServer" id="700">
    <property type="toxin name" value="Ts6.2 precursor"/>
</dbReference>
<dbReference type="GO" id="GO:0005576">
    <property type="term" value="C:extracellular region"/>
    <property type="evidence" value="ECO:0007669"/>
    <property type="project" value="UniProtKB-SubCell"/>
</dbReference>
<dbReference type="GO" id="GO:0008200">
    <property type="term" value="F:ion channel inhibitor activity"/>
    <property type="evidence" value="ECO:0007669"/>
    <property type="project" value="InterPro"/>
</dbReference>
<dbReference type="GO" id="GO:0090729">
    <property type="term" value="F:toxin activity"/>
    <property type="evidence" value="ECO:0007669"/>
    <property type="project" value="UniProtKB-KW"/>
</dbReference>
<dbReference type="InterPro" id="IPR004214">
    <property type="entry name" value="Conotoxin"/>
</dbReference>
<dbReference type="Pfam" id="PF02950">
    <property type="entry name" value="Conotoxin"/>
    <property type="match status" value="1"/>
</dbReference>
<feature type="signal peptide" evidence="2">
    <location>
        <begin position="1"/>
        <end position="19"/>
    </location>
</feature>
<feature type="propeptide" id="PRO_0000404804" evidence="1">
    <location>
        <begin position="20"/>
        <end position="38"/>
    </location>
</feature>
<feature type="peptide" id="PRO_0000404805" description="Conotoxin TsMEKL-P012">
    <location>
        <begin position="42"/>
        <end position="78"/>
    </location>
</feature>
<feature type="disulfide bond" evidence="1">
    <location>
        <begin position="52"/>
        <end position="66"/>
    </location>
</feature>
<feature type="disulfide bond" evidence="1">
    <location>
        <begin position="59"/>
        <end position="70"/>
    </location>
</feature>
<feature type="disulfide bond" evidence="1">
    <location>
        <begin position="65"/>
        <end position="75"/>
    </location>
</feature>
<accession>Q9BPC1</accession>
<organism>
    <name type="scientific">Conus tessulatus</name>
    <name type="common">Tessellate cone</name>
    <dbReference type="NCBI Taxonomy" id="101317"/>
    <lineage>
        <taxon>Eukaryota</taxon>
        <taxon>Metazoa</taxon>
        <taxon>Spiralia</taxon>
        <taxon>Lophotrochozoa</taxon>
        <taxon>Mollusca</taxon>
        <taxon>Gastropoda</taxon>
        <taxon>Caenogastropoda</taxon>
        <taxon>Neogastropoda</taxon>
        <taxon>Conoidea</taxon>
        <taxon>Conidae</taxon>
        <taxon>Conus</taxon>
        <taxon>Tesselliconus</taxon>
    </lineage>
</organism>
<name>O262_CONTS</name>
<sequence length="78" mass="8799">MEKLTILLLLAAVLVLAQALIKKGGGEKRQKEKINFLSKRKTTAESWWEGECSGWSVYCTSDPECCSGECSSYYCELW</sequence>
<evidence type="ECO:0000250" key="1"/>
<evidence type="ECO:0000255" key="2"/>
<evidence type="ECO:0000305" key="3"/>
<keyword id="KW-0165">Cleavage on pair of basic residues</keyword>
<keyword id="KW-1015">Disulfide bond</keyword>
<keyword id="KW-0960">Knottin</keyword>
<keyword id="KW-0528">Neurotoxin</keyword>
<keyword id="KW-0964">Secreted</keyword>
<keyword id="KW-0732">Signal</keyword>
<keyword id="KW-0800">Toxin</keyword>